<organism>
    <name type="scientific">Macaca fuscata fuscata</name>
    <name type="common">Japanese macaque</name>
    <dbReference type="NCBI Taxonomy" id="9543"/>
    <lineage>
        <taxon>Eukaryota</taxon>
        <taxon>Metazoa</taxon>
        <taxon>Chordata</taxon>
        <taxon>Craniata</taxon>
        <taxon>Vertebrata</taxon>
        <taxon>Euteleostomi</taxon>
        <taxon>Mammalia</taxon>
        <taxon>Eutheria</taxon>
        <taxon>Euarchontoglires</taxon>
        <taxon>Primates</taxon>
        <taxon>Haplorrhini</taxon>
        <taxon>Catarrhini</taxon>
        <taxon>Cercopithecidae</taxon>
        <taxon>Cercopithecinae</taxon>
        <taxon>Macaca</taxon>
    </lineage>
</organism>
<sequence>EICPTFLRVIESLFLDTPSSFEAAMGFFSPDQDMSEAGAQLKKVLDTLPAKARDSIIKLMEKIDKSLLCN</sequence>
<reference key="1">
    <citation type="journal article" date="1996" name="Am. J. Respir. Cell Mol. Biol.">
        <title>Monkey Clara cell 10 kDa protein (CC10): a characterization of the amino acid sequence with an evolutional comparison with humans, rabbits, rats, and mice.</title>
        <authorList>
            <person name="Hashimoto S."/>
            <person name="Nakagawa K."/>
            <person name="Sueishi K."/>
        </authorList>
    </citation>
    <scope>PROTEIN SEQUENCE</scope>
    <source>
        <tissue>Lung</tissue>
    </source>
</reference>
<feature type="chain" id="PRO_0000188083" description="Uteroglobin">
    <location>
        <begin position="1"/>
        <end position="70"/>
    </location>
</feature>
<feature type="disulfide bond" description="Interchain (with C-69)" evidence="1">
    <location>
        <position position="3"/>
    </location>
</feature>
<feature type="disulfide bond" description="Interchain (with C-3)" evidence="1">
    <location>
        <position position="69"/>
    </location>
</feature>
<comment type="function">
    <text>Binds phosphatidylcholine, phosphatidylinositol, polychlorinated biphenyls (PCB) and weakly progesterone, potent inhibitor of phospholipase A2.</text>
</comment>
<comment type="subunit">
    <text evidence="2">Antiparallel homodimer; disulfide-linked (By similarity). Interaction with LMBR1L is controversial (By similarity).</text>
</comment>
<comment type="subcellular location">
    <subcellularLocation>
        <location>Secreted</location>
    </subcellularLocation>
</comment>
<comment type="tissue specificity">
    <text>Club cells (nonciliated cells of the surface epithelium of the pulmonary airways).</text>
</comment>
<comment type="similarity">
    <text evidence="3">Belongs to the secretoglobin family.</text>
</comment>
<protein>
    <recommendedName>
        <fullName>Uteroglobin</fullName>
    </recommendedName>
    <alternativeName>
        <fullName>Club cell phospholipid-binding protein</fullName>
        <shortName>CCPBP</shortName>
    </alternativeName>
    <alternativeName>
        <fullName>Club cells 10 kDa secretory protein</fullName>
        <shortName>CC10</shortName>
    </alternativeName>
    <alternativeName>
        <fullName>Secretoglobin family 1A member 1</fullName>
    </alternativeName>
</protein>
<proteinExistence type="evidence at protein level"/>
<accession>Q9TS45</accession>
<gene>
    <name type="primary">SCGB1A1</name>
    <name type="synonym">CC10</name>
    <name type="synonym">UGB</name>
</gene>
<keyword id="KW-0903">Direct protein sequencing</keyword>
<keyword id="KW-1015">Disulfide bond</keyword>
<keyword id="KW-0593">Phospholipase A2 inhibitor</keyword>
<keyword id="KW-0964">Secreted</keyword>
<evidence type="ECO:0000250" key="1"/>
<evidence type="ECO:0000250" key="2">
    <source>
        <dbReference type="UniProtKB" id="P11684"/>
    </source>
</evidence>
<evidence type="ECO:0000305" key="3"/>
<dbReference type="SMR" id="Q9TS45"/>
<dbReference type="GO" id="GO:0005737">
    <property type="term" value="C:cytoplasm"/>
    <property type="evidence" value="ECO:0007669"/>
    <property type="project" value="TreeGrafter"/>
</dbReference>
<dbReference type="GO" id="GO:0005615">
    <property type="term" value="C:extracellular space"/>
    <property type="evidence" value="ECO:0007669"/>
    <property type="project" value="TreeGrafter"/>
</dbReference>
<dbReference type="GO" id="GO:0019834">
    <property type="term" value="F:phospholipase A2 inhibitor activity"/>
    <property type="evidence" value="ECO:0007669"/>
    <property type="project" value="UniProtKB-KW"/>
</dbReference>
<dbReference type="GO" id="GO:0007165">
    <property type="term" value="P:signal transduction"/>
    <property type="evidence" value="ECO:0007669"/>
    <property type="project" value="InterPro"/>
</dbReference>
<dbReference type="CDD" id="cd00633">
    <property type="entry name" value="Secretoglobin"/>
    <property type="match status" value="1"/>
</dbReference>
<dbReference type="FunFam" id="1.10.210.10:FF:000001">
    <property type="entry name" value="Uteroglobin"/>
    <property type="match status" value="1"/>
</dbReference>
<dbReference type="Gene3D" id="1.10.210.10">
    <property type="entry name" value="Secretoglobin"/>
    <property type="match status" value="1"/>
</dbReference>
<dbReference type="InterPro" id="IPR016126">
    <property type="entry name" value="Secretoglobin"/>
</dbReference>
<dbReference type="InterPro" id="IPR043215">
    <property type="entry name" value="Secretoglobin_1C-like"/>
</dbReference>
<dbReference type="InterPro" id="IPR035960">
    <property type="entry name" value="Secretoglobin_sf"/>
</dbReference>
<dbReference type="InterPro" id="IPR000329">
    <property type="entry name" value="Uteroglobin"/>
</dbReference>
<dbReference type="PANTHER" id="PTHR10136">
    <property type="entry name" value="SECRETOGLOBIN FAMILY 1 MEMBER"/>
    <property type="match status" value="1"/>
</dbReference>
<dbReference type="PANTHER" id="PTHR10136:SF6">
    <property type="entry name" value="UTEROGLOBIN"/>
    <property type="match status" value="1"/>
</dbReference>
<dbReference type="Pfam" id="PF01099">
    <property type="entry name" value="Uteroglobin"/>
    <property type="match status" value="1"/>
</dbReference>
<dbReference type="PRINTS" id="PR00486">
    <property type="entry name" value="UTEROGLOBIN"/>
</dbReference>
<dbReference type="SMART" id="SM00096">
    <property type="entry name" value="UTG"/>
    <property type="match status" value="1"/>
</dbReference>
<dbReference type="SUPFAM" id="SSF48201">
    <property type="entry name" value="Uteroglobin-like"/>
    <property type="match status" value="1"/>
</dbReference>
<dbReference type="PROSITE" id="PS51311">
    <property type="entry name" value="SCGB"/>
    <property type="match status" value="1"/>
</dbReference>
<name>UTER_MACFU</name>